<dbReference type="EMBL" id="CU329670">
    <property type="protein sequence ID" value="CAA91170.1"/>
    <property type="molecule type" value="Genomic_DNA"/>
</dbReference>
<dbReference type="PIR" id="T38571">
    <property type="entry name" value="S62460"/>
</dbReference>
<dbReference type="RefSeq" id="NP_593085.1">
    <property type="nucleotide sequence ID" value="NM_001018483.2"/>
</dbReference>
<dbReference type="SMR" id="Q09807"/>
<dbReference type="BioGRID" id="278434">
    <property type="interactions" value="3"/>
</dbReference>
<dbReference type="FunCoup" id="Q09807">
    <property type="interactions" value="118"/>
</dbReference>
<dbReference type="STRING" id="284812.Q09807"/>
<dbReference type="iPTMnet" id="Q09807"/>
<dbReference type="PaxDb" id="4896-SPAC2G11.05c.1"/>
<dbReference type="EnsemblFungi" id="SPAC2G11.05c.1">
    <property type="protein sequence ID" value="SPAC2G11.05c.1:pep"/>
    <property type="gene ID" value="SPAC2G11.05c"/>
</dbReference>
<dbReference type="GeneID" id="2541947"/>
<dbReference type="KEGG" id="spo:2541947"/>
<dbReference type="PomBase" id="SPAC2G11.05c">
    <property type="gene designation" value="rim20"/>
</dbReference>
<dbReference type="VEuPathDB" id="FungiDB:SPAC2G11.05c"/>
<dbReference type="eggNOG" id="KOG2220">
    <property type="taxonomic scope" value="Eukaryota"/>
</dbReference>
<dbReference type="HOGENOM" id="CLU_388384_0_0_1"/>
<dbReference type="InParanoid" id="Q09807"/>
<dbReference type="OMA" id="WEHCFLA"/>
<dbReference type="PhylomeDB" id="Q09807"/>
<dbReference type="PRO" id="PR:Q09807"/>
<dbReference type="Proteomes" id="UP000002485">
    <property type="component" value="Chromosome I"/>
</dbReference>
<dbReference type="GO" id="GO:0032153">
    <property type="term" value="C:cell division site"/>
    <property type="evidence" value="ECO:0007005"/>
    <property type="project" value="PomBase"/>
</dbReference>
<dbReference type="GO" id="GO:0005829">
    <property type="term" value="C:cytosol"/>
    <property type="evidence" value="ECO:0007005"/>
    <property type="project" value="PomBase"/>
</dbReference>
<dbReference type="GO" id="GO:0005768">
    <property type="term" value="C:endosome"/>
    <property type="evidence" value="ECO:0000318"/>
    <property type="project" value="GO_Central"/>
</dbReference>
<dbReference type="GO" id="GO:0044732">
    <property type="term" value="C:mitotic spindle pole body"/>
    <property type="evidence" value="ECO:0007005"/>
    <property type="project" value="PomBase"/>
</dbReference>
<dbReference type="GO" id="GO:0005634">
    <property type="term" value="C:nucleus"/>
    <property type="evidence" value="ECO:0007005"/>
    <property type="project" value="PomBase"/>
</dbReference>
<dbReference type="GO" id="GO:0016192">
    <property type="term" value="P:vesicle-mediated transport"/>
    <property type="evidence" value="ECO:0000250"/>
    <property type="project" value="PomBase"/>
</dbReference>
<dbReference type="CDD" id="cd09241">
    <property type="entry name" value="BRO1_ScRim20-like"/>
    <property type="match status" value="1"/>
</dbReference>
<dbReference type="Gene3D" id="1.25.40.280">
    <property type="entry name" value="alix/aip1 like domains"/>
    <property type="match status" value="1"/>
</dbReference>
<dbReference type="InterPro" id="IPR004328">
    <property type="entry name" value="BRO1_dom"/>
</dbReference>
<dbReference type="InterPro" id="IPR038499">
    <property type="entry name" value="BRO1_sf"/>
</dbReference>
<dbReference type="PANTHER" id="PTHR23030">
    <property type="entry name" value="PCD6 INTERACTING PROTEIN-RELATED"/>
    <property type="match status" value="1"/>
</dbReference>
<dbReference type="PANTHER" id="PTHR23030:SF39">
    <property type="entry name" value="PROGRAMMED CELL DEATH 6-INTERACTING PROTEIN"/>
    <property type="match status" value="1"/>
</dbReference>
<dbReference type="Pfam" id="PF03097">
    <property type="entry name" value="BRO1"/>
    <property type="match status" value="1"/>
</dbReference>
<dbReference type="SMART" id="SM01041">
    <property type="entry name" value="BRO1"/>
    <property type="match status" value="1"/>
</dbReference>
<dbReference type="PROSITE" id="PS51180">
    <property type="entry name" value="BRO1"/>
    <property type="match status" value="1"/>
</dbReference>
<feature type="chain" id="PRO_0000218883" description="pH-response regulator protein palA/rim20">
    <location>
        <begin position="1"/>
        <end position="701"/>
    </location>
</feature>
<feature type="domain" description="BRO1" evidence="2">
    <location>
        <begin position="2"/>
        <end position="378"/>
    </location>
</feature>
<feature type="coiled-coil region" evidence="1">
    <location>
        <begin position="630"/>
        <end position="678"/>
    </location>
</feature>
<organism>
    <name type="scientific">Schizosaccharomyces pombe (strain 972 / ATCC 24843)</name>
    <name type="common">Fission yeast</name>
    <dbReference type="NCBI Taxonomy" id="284812"/>
    <lineage>
        <taxon>Eukaryota</taxon>
        <taxon>Fungi</taxon>
        <taxon>Dikarya</taxon>
        <taxon>Ascomycota</taxon>
        <taxon>Taphrinomycotina</taxon>
        <taxon>Schizosaccharomycetes</taxon>
        <taxon>Schizosaccharomycetales</taxon>
        <taxon>Schizosaccharomycetaceae</taxon>
        <taxon>Schizosaccharomyces</taxon>
    </lineage>
</organism>
<sequence length="701" mass="81770">MEFLNIPTKNTFHWSCDPLFNELKRLSCFKSFTYENDLKTFKALRSQLCLSHPSINSLSSFQTYHQLLCVLEQKHLSECVAPFVWTLSSSSNERESFENLIFEHACLIYRLACTYHTTAISLCNEKPPNLVQACQYFQLSAGCFRYINDFYIYTKSLDFNENLLKAWEIYCLAEAQTCIFSKANSNDTTSESIIVKILAKVFLLYEDAYKLFKNATGAPSIFVHWTYIQKLFYQTITYQIISRTSYSLNKYGENISYLRLSLLHCKEALKTRFDFGFNVKVYEKLEKLESSLQFELKRNERDNDFIHLQPEIPVGSFPLLDTVTMVQSITPDVLTDKTAAYPYFSTCLDKEFMDLIEEHEKNILDAAVKSIDCLTKEGTEKLFALMEEIKSVNDNRYITETSNKVMENFTEIKNLGGLEFLRSEASSLDCLIDKVNGTYRHCCQALDEIINSVKSSQNMKEKGFYSDVIKLHEEVSLLKVNVENSQNAKDTIQKDISAFGKDIFELSAQSERILSNLAEKKNPNTDQLLLQANSYLAQWDLLKDERNMLKKLGSNDYFNISMYSNHTDIHSLLKCFREAVDAKWNFRRQRERQEIIIQNVEKLKSYLNSFKVQAECSEISKILSFSQETEKKYKFLLQTVRNETEIARELYNIICRAEERYSQYENRYENENRLNKIKLQHSSSNAFNPEIHKIKFKSSKK</sequence>
<protein>
    <recommendedName>
        <fullName>pH-response regulator protein palA/rim20</fullName>
    </recommendedName>
</protein>
<keyword id="KW-0175">Coiled coil</keyword>
<keyword id="KW-1185">Reference proteome</keyword>
<reference key="1">
    <citation type="journal article" date="2002" name="Nature">
        <title>The genome sequence of Schizosaccharomyces pombe.</title>
        <authorList>
            <person name="Wood V."/>
            <person name="Gwilliam R."/>
            <person name="Rajandream M.A."/>
            <person name="Lyne M.H."/>
            <person name="Lyne R."/>
            <person name="Stewart A."/>
            <person name="Sgouros J.G."/>
            <person name="Peat N."/>
            <person name="Hayles J."/>
            <person name="Baker S.G."/>
            <person name="Basham D."/>
            <person name="Bowman S."/>
            <person name="Brooks K."/>
            <person name="Brown D."/>
            <person name="Brown S."/>
            <person name="Chillingworth T."/>
            <person name="Churcher C.M."/>
            <person name="Collins M."/>
            <person name="Connor R."/>
            <person name="Cronin A."/>
            <person name="Davis P."/>
            <person name="Feltwell T."/>
            <person name="Fraser A."/>
            <person name="Gentles S."/>
            <person name="Goble A."/>
            <person name="Hamlin N."/>
            <person name="Harris D.E."/>
            <person name="Hidalgo J."/>
            <person name="Hodgson G."/>
            <person name="Holroyd S."/>
            <person name="Hornsby T."/>
            <person name="Howarth S."/>
            <person name="Huckle E.J."/>
            <person name="Hunt S."/>
            <person name="Jagels K."/>
            <person name="James K.D."/>
            <person name="Jones L."/>
            <person name="Jones M."/>
            <person name="Leather S."/>
            <person name="McDonald S."/>
            <person name="McLean J."/>
            <person name="Mooney P."/>
            <person name="Moule S."/>
            <person name="Mungall K.L."/>
            <person name="Murphy L.D."/>
            <person name="Niblett D."/>
            <person name="Odell C."/>
            <person name="Oliver K."/>
            <person name="O'Neil S."/>
            <person name="Pearson D."/>
            <person name="Quail M.A."/>
            <person name="Rabbinowitsch E."/>
            <person name="Rutherford K.M."/>
            <person name="Rutter S."/>
            <person name="Saunders D."/>
            <person name="Seeger K."/>
            <person name="Sharp S."/>
            <person name="Skelton J."/>
            <person name="Simmonds M.N."/>
            <person name="Squares R."/>
            <person name="Squares S."/>
            <person name="Stevens K."/>
            <person name="Taylor K."/>
            <person name="Taylor R.G."/>
            <person name="Tivey A."/>
            <person name="Walsh S.V."/>
            <person name="Warren T."/>
            <person name="Whitehead S."/>
            <person name="Woodward J.R."/>
            <person name="Volckaert G."/>
            <person name="Aert R."/>
            <person name="Robben J."/>
            <person name="Grymonprez B."/>
            <person name="Weltjens I."/>
            <person name="Vanstreels E."/>
            <person name="Rieger M."/>
            <person name="Schaefer M."/>
            <person name="Mueller-Auer S."/>
            <person name="Gabel C."/>
            <person name="Fuchs M."/>
            <person name="Duesterhoeft A."/>
            <person name="Fritzc C."/>
            <person name="Holzer E."/>
            <person name="Moestl D."/>
            <person name="Hilbert H."/>
            <person name="Borzym K."/>
            <person name="Langer I."/>
            <person name="Beck A."/>
            <person name="Lehrach H."/>
            <person name="Reinhardt R."/>
            <person name="Pohl T.M."/>
            <person name="Eger P."/>
            <person name="Zimmermann W."/>
            <person name="Wedler H."/>
            <person name="Wambutt R."/>
            <person name="Purnelle B."/>
            <person name="Goffeau A."/>
            <person name="Cadieu E."/>
            <person name="Dreano S."/>
            <person name="Gloux S."/>
            <person name="Lelaure V."/>
            <person name="Mottier S."/>
            <person name="Galibert F."/>
            <person name="Aves S.J."/>
            <person name="Xiang Z."/>
            <person name="Hunt C."/>
            <person name="Moore K."/>
            <person name="Hurst S.M."/>
            <person name="Lucas M."/>
            <person name="Rochet M."/>
            <person name="Gaillardin C."/>
            <person name="Tallada V.A."/>
            <person name="Garzon A."/>
            <person name="Thode G."/>
            <person name="Daga R.R."/>
            <person name="Cruzado L."/>
            <person name="Jimenez J."/>
            <person name="Sanchez M."/>
            <person name="del Rey F."/>
            <person name="Benito J."/>
            <person name="Dominguez A."/>
            <person name="Revuelta J.L."/>
            <person name="Moreno S."/>
            <person name="Armstrong J."/>
            <person name="Forsburg S.L."/>
            <person name="Cerutti L."/>
            <person name="Lowe T."/>
            <person name="McCombie W.R."/>
            <person name="Paulsen I."/>
            <person name="Potashkin J."/>
            <person name="Shpakovski G.V."/>
            <person name="Ussery D."/>
            <person name="Barrell B.G."/>
            <person name="Nurse P."/>
        </authorList>
    </citation>
    <scope>NUCLEOTIDE SEQUENCE [LARGE SCALE GENOMIC DNA]</scope>
    <source>
        <strain>972 / ATCC 24843</strain>
    </source>
</reference>
<accession>Q09807</accession>
<proteinExistence type="inferred from homology"/>
<gene>
    <name type="primary">rim20</name>
    <name type="ORF">SPAC2G11.05c</name>
</gene>
<evidence type="ECO:0000255" key="1"/>
<evidence type="ECO:0000255" key="2">
    <source>
        <dbReference type="PROSITE-ProRule" id="PRU00526"/>
    </source>
</evidence>
<evidence type="ECO:0000305" key="3"/>
<name>PALA_SCHPO</name>
<comment type="similarity">
    <text evidence="3">Belongs to the palA/RIM20 family.</text>
</comment>